<protein>
    <recommendedName>
        <fullName>Serum paraoxonase/lactonase 3</fullName>
        <ecNumber>3.1.1.2</ecNumber>
        <ecNumber>3.1.1.81</ecNumber>
        <ecNumber>3.1.8.1</ecNumber>
    </recommendedName>
</protein>
<name>PON3_MOUSE</name>
<accession>Q62087</accession>
<accession>Q4FZK0</accession>
<accession>Q8C2I7</accession>
<evidence type="ECO:0000250" key="1"/>
<evidence type="ECO:0000250" key="2">
    <source>
        <dbReference type="UniProtKB" id="Q15166"/>
    </source>
</evidence>
<evidence type="ECO:0000255" key="3"/>
<evidence type="ECO:0000269" key="4">
    <source>
    </source>
</evidence>
<evidence type="ECO:0000305" key="5"/>
<keyword id="KW-0106">Calcium</keyword>
<keyword id="KW-1015">Disulfide bond</keyword>
<keyword id="KW-0325">Glycoprotein</keyword>
<keyword id="KW-0378">Hydrolase</keyword>
<keyword id="KW-0479">Metal-binding</keyword>
<keyword id="KW-0597">Phosphoprotein</keyword>
<keyword id="KW-1185">Reference proteome</keyword>
<keyword id="KW-0964">Secreted</keyword>
<keyword id="KW-0732">Signal</keyword>
<comment type="function">
    <text evidence="1">Has low activity towards the organophosphate paraxon and aromatic carboxylic acid esters. Rapidly hydrolyzes lactones such as statin prodrugs (e.g. lovastatin). Hydrolyzes aromatic lactones and 5- or 6-member ring lactones with aliphatic substituents but not simple lactones or those with polar substituents (By similarity).</text>
</comment>
<comment type="catalytic activity">
    <reaction evidence="4">
        <text>a phenyl acetate + H2O = a phenol + acetate + H(+)</text>
        <dbReference type="Rhea" id="RHEA:17309"/>
        <dbReference type="ChEBI" id="CHEBI:15377"/>
        <dbReference type="ChEBI" id="CHEBI:15378"/>
        <dbReference type="ChEBI" id="CHEBI:30089"/>
        <dbReference type="ChEBI" id="CHEBI:33853"/>
        <dbReference type="ChEBI" id="CHEBI:140310"/>
        <dbReference type="EC" id="3.1.1.2"/>
    </reaction>
</comment>
<comment type="catalytic activity">
    <reaction evidence="4">
        <text>An aryl dialkyl phosphate + H2O = dialkyl phosphate + an aryl alcohol.</text>
        <dbReference type="EC" id="3.1.8.1"/>
    </reaction>
</comment>
<comment type="catalytic activity">
    <reaction evidence="4">
        <text>an N-acyl-L-homoserine lactone + H2O = an N-acyl-L-homoserine + H(+)</text>
        <dbReference type="Rhea" id="RHEA:22576"/>
        <dbReference type="ChEBI" id="CHEBI:15377"/>
        <dbReference type="ChEBI" id="CHEBI:15378"/>
        <dbReference type="ChEBI" id="CHEBI:55474"/>
        <dbReference type="ChEBI" id="CHEBI:58921"/>
        <dbReference type="EC" id="3.1.1.81"/>
    </reaction>
</comment>
<comment type="cofactor">
    <cofactor evidence="1">
        <name>Ca(2+)</name>
        <dbReference type="ChEBI" id="CHEBI:29108"/>
    </cofactor>
    <text evidence="1">Binds 2 calcium ions per subunit.</text>
</comment>
<comment type="subunit">
    <text evidence="1">Homodimer.</text>
</comment>
<comment type="subcellular location">
    <subcellularLocation>
        <location evidence="1">Secreted</location>
        <location evidence="1">Extracellular space</location>
    </subcellularLocation>
</comment>
<comment type="PTM">
    <text evidence="1">Glycosylated.</text>
</comment>
<comment type="PTM">
    <text evidence="1">The signal sequence is not cleaved.</text>
</comment>
<comment type="similarity">
    <text evidence="5">Belongs to the paraoxonase family.</text>
</comment>
<reference key="1">
    <citation type="journal article" date="1996" name="Genomics">
        <title>The human serum paraoxonase/arylesterase gene (PON1) is one member of a multigene family.</title>
        <authorList>
            <person name="Primo-Parmo S.L."/>
            <person name="Sorenson R.C."/>
            <person name="Teiber J."/>
            <person name="La Du B.N."/>
        </authorList>
    </citation>
    <scope>NUCLEOTIDE SEQUENCE [MRNA]</scope>
    <source>
        <strain>BALB/cJ</strain>
        <tissue>Liver</tissue>
    </source>
</reference>
<reference key="2">
    <citation type="journal article" date="2005" name="Science">
        <title>The transcriptional landscape of the mammalian genome.</title>
        <authorList>
            <person name="Carninci P."/>
            <person name="Kasukawa T."/>
            <person name="Katayama S."/>
            <person name="Gough J."/>
            <person name="Frith M.C."/>
            <person name="Maeda N."/>
            <person name="Oyama R."/>
            <person name="Ravasi T."/>
            <person name="Lenhard B."/>
            <person name="Wells C."/>
            <person name="Kodzius R."/>
            <person name="Shimokawa K."/>
            <person name="Bajic V.B."/>
            <person name="Brenner S.E."/>
            <person name="Batalov S."/>
            <person name="Forrest A.R."/>
            <person name="Zavolan M."/>
            <person name="Davis M.J."/>
            <person name="Wilming L.G."/>
            <person name="Aidinis V."/>
            <person name="Allen J.E."/>
            <person name="Ambesi-Impiombato A."/>
            <person name="Apweiler R."/>
            <person name="Aturaliya R.N."/>
            <person name="Bailey T.L."/>
            <person name="Bansal M."/>
            <person name="Baxter L."/>
            <person name="Beisel K.W."/>
            <person name="Bersano T."/>
            <person name="Bono H."/>
            <person name="Chalk A.M."/>
            <person name="Chiu K.P."/>
            <person name="Choudhary V."/>
            <person name="Christoffels A."/>
            <person name="Clutterbuck D.R."/>
            <person name="Crowe M.L."/>
            <person name="Dalla E."/>
            <person name="Dalrymple B.P."/>
            <person name="de Bono B."/>
            <person name="Della Gatta G."/>
            <person name="di Bernardo D."/>
            <person name="Down T."/>
            <person name="Engstrom P."/>
            <person name="Fagiolini M."/>
            <person name="Faulkner G."/>
            <person name="Fletcher C.F."/>
            <person name="Fukushima T."/>
            <person name="Furuno M."/>
            <person name="Futaki S."/>
            <person name="Gariboldi M."/>
            <person name="Georgii-Hemming P."/>
            <person name="Gingeras T.R."/>
            <person name="Gojobori T."/>
            <person name="Green R.E."/>
            <person name="Gustincich S."/>
            <person name="Harbers M."/>
            <person name="Hayashi Y."/>
            <person name="Hensch T.K."/>
            <person name="Hirokawa N."/>
            <person name="Hill D."/>
            <person name="Huminiecki L."/>
            <person name="Iacono M."/>
            <person name="Ikeo K."/>
            <person name="Iwama A."/>
            <person name="Ishikawa T."/>
            <person name="Jakt M."/>
            <person name="Kanapin A."/>
            <person name="Katoh M."/>
            <person name="Kawasawa Y."/>
            <person name="Kelso J."/>
            <person name="Kitamura H."/>
            <person name="Kitano H."/>
            <person name="Kollias G."/>
            <person name="Krishnan S.P."/>
            <person name="Kruger A."/>
            <person name="Kummerfeld S.K."/>
            <person name="Kurochkin I.V."/>
            <person name="Lareau L.F."/>
            <person name="Lazarevic D."/>
            <person name="Lipovich L."/>
            <person name="Liu J."/>
            <person name="Liuni S."/>
            <person name="McWilliam S."/>
            <person name="Madan Babu M."/>
            <person name="Madera M."/>
            <person name="Marchionni L."/>
            <person name="Matsuda H."/>
            <person name="Matsuzawa S."/>
            <person name="Miki H."/>
            <person name="Mignone F."/>
            <person name="Miyake S."/>
            <person name="Morris K."/>
            <person name="Mottagui-Tabar S."/>
            <person name="Mulder N."/>
            <person name="Nakano N."/>
            <person name="Nakauchi H."/>
            <person name="Ng P."/>
            <person name="Nilsson R."/>
            <person name="Nishiguchi S."/>
            <person name="Nishikawa S."/>
            <person name="Nori F."/>
            <person name="Ohara O."/>
            <person name="Okazaki Y."/>
            <person name="Orlando V."/>
            <person name="Pang K.C."/>
            <person name="Pavan W.J."/>
            <person name="Pavesi G."/>
            <person name="Pesole G."/>
            <person name="Petrovsky N."/>
            <person name="Piazza S."/>
            <person name="Reed J."/>
            <person name="Reid J.F."/>
            <person name="Ring B.Z."/>
            <person name="Ringwald M."/>
            <person name="Rost B."/>
            <person name="Ruan Y."/>
            <person name="Salzberg S.L."/>
            <person name="Sandelin A."/>
            <person name="Schneider C."/>
            <person name="Schoenbach C."/>
            <person name="Sekiguchi K."/>
            <person name="Semple C.A."/>
            <person name="Seno S."/>
            <person name="Sessa L."/>
            <person name="Sheng Y."/>
            <person name="Shibata Y."/>
            <person name="Shimada H."/>
            <person name="Shimada K."/>
            <person name="Silva D."/>
            <person name="Sinclair B."/>
            <person name="Sperling S."/>
            <person name="Stupka E."/>
            <person name="Sugiura K."/>
            <person name="Sultana R."/>
            <person name="Takenaka Y."/>
            <person name="Taki K."/>
            <person name="Tammoja K."/>
            <person name="Tan S.L."/>
            <person name="Tang S."/>
            <person name="Taylor M.S."/>
            <person name="Tegner J."/>
            <person name="Teichmann S.A."/>
            <person name="Ueda H.R."/>
            <person name="van Nimwegen E."/>
            <person name="Verardo R."/>
            <person name="Wei C.L."/>
            <person name="Yagi K."/>
            <person name="Yamanishi H."/>
            <person name="Zabarovsky E."/>
            <person name="Zhu S."/>
            <person name="Zimmer A."/>
            <person name="Hide W."/>
            <person name="Bult C."/>
            <person name="Grimmond S.M."/>
            <person name="Teasdale R.D."/>
            <person name="Liu E.T."/>
            <person name="Brusic V."/>
            <person name="Quackenbush J."/>
            <person name="Wahlestedt C."/>
            <person name="Mattick J.S."/>
            <person name="Hume D.A."/>
            <person name="Kai C."/>
            <person name="Sasaki D."/>
            <person name="Tomaru Y."/>
            <person name="Fukuda S."/>
            <person name="Kanamori-Katayama M."/>
            <person name="Suzuki M."/>
            <person name="Aoki J."/>
            <person name="Arakawa T."/>
            <person name="Iida J."/>
            <person name="Imamura K."/>
            <person name="Itoh M."/>
            <person name="Kato T."/>
            <person name="Kawaji H."/>
            <person name="Kawagashira N."/>
            <person name="Kawashima T."/>
            <person name="Kojima M."/>
            <person name="Kondo S."/>
            <person name="Konno H."/>
            <person name="Nakano K."/>
            <person name="Ninomiya N."/>
            <person name="Nishio T."/>
            <person name="Okada M."/>
            <person name="Plessy C."/>
            <person name="Shibata K."/>
            <person name="Shiraki T."/>
            <person name="Suzuki S."/>
            <person name="Tagami M."/>
            <person name="Waki K."/>
            <person name="Watahiki A."/>
            <person name="Okamura-Oho Y."/>
            <person name="Suzuki H."/>
            <person name="Kawai J."/>
            <person name="Hayashizaki Y."/>
        </authorList>
    </citation>
    <scope>NUCLEOTIDE SEQUENCE [LARGE SCALE MRNA]</scope>
    <source>
        <strain>NOD</strain>
        <tissue>Thymus</tissue>
    </source>
</reference>
<reference key="3">
    <citation type="submission" date="2005-09" db="EMBL/GenBank/DDBJ databases">
        <authorList>
            <person name="Mural R.J."/>
            <person name="Adams M.D."/>
            <person name="Myers E.W."/>
            <person name="Smith H.O."/>
            <person name="Venter J.C."/>
        </authorList>
    </citation>
    <scope>NUCLEOTIDE SEQUENCE [LARGE SCALE GENOMIC DNA]</scope>
</reference>
<reference key="4">
    <citation type="journal article" date="2004" name="Genome Res.">
        <title>The status, quality, and expansion of the NIH full-length cDNA project: the Mammalian Gene Collection (MGC).</title>
        <authorList>
            <consortium name="The MGC Project Team"/>
        </authorList>
    </citation>
    <scope>NUCLEOTIDE SEQUENCE [LARGE SCALE MRNA]</scope>
    <source>
        <tissue>Thyroid</tissue>
    </source>
</reference>
<reference key="5">
    <citation type="journal article" date="2005" name="FEBS Lett.">
        <title>Quorum quenching enzyme activity is widely conserved in the sera of mammalian species.</title>
        <authorList>
            <person name="Yang F."/>
            <person name="Wang L.H."/>
            <person name="Wang J."/>
            <person name="Dong Y.H."/>
            <person name="Hu J.Y."/>
            <person name="Zhang L.H."/>
        </authorList>
    </citation>
    <scope>CATALYTIC ACTIVITY</scope>
</reference>
<reference key="6">
    <citation type="journal article" date="2010" name="Cell">
        <title>A tissue-specific atlas of mouse protein phosphorylation and expression.</title>
        <authorList>
            <person name="Huttlin E.L."/>
            <person name="Jedrychowski M.P."/>
            <person name="Elias J.E."/>
            <person name="Goswami T."/>
            <person name="Rad R."/>
            <person name="Beausoleil S.A."/>
            <person name="Villen J."/>
            <person name="Haas W."/>
            <person name="Sowa M.E."/>
            <person name="Gygi S.P."/>
        </authorList>
    </citation>
    <scope>IDENTIFICATION BY MASS SPECTROMETRY [LARGE SCALE ANALYSIS]</scope>
    <source>
        <tissue>Brown adipose tissue</tissue>
        <tissue>Heart</tissue>
        <tissue>Kidney</tissue>
        <tissue>Liver</tissue>
        <tissue>Lung</tissue>
        <tissue>Pancreas</tissue>
        <tissue>Spleen</tissue>
        <tissue>Testis</tissue>
    </source>
</reference>
<organism>
    <name type="scientific">Mus musculus</name>
    <name type="common">Mouse</name>
    <dbReference type="NCBI Taxonomy" id="10090"/>
    <lineage>
        <taxon>Eukaryota</taxon>
        <taxon>Metazoa</taxon>
        <taxon>Chordata</taxon>
        <taxon>Craniata</taxon>
        <taxon>Vertebrata</taxon>
        <taxon>Euteleostomi</taxon>
        <taxon>Mammalia</taxon>
        <taxon>Eutheria</taxon>
        <taxon>Euarchontoglires</taxon>
        <taxon>Glires</taxon>
        <taxon>Rodentia</taxon>
        <taxon>Myomorpha</taxon>
        <taxon>Muroidea</taxon>
        <taxon>Muridae</taxon>
        <taxon>Murinae</taxon>
        <taxon>Mus</taxon>
        <taxon>Mus</taxon>
    </lineage>
</organism>
<proteinExistence type="evidence at protein level"/>
<dbReference type="EC" id="3.1.1.2"/>
<dbReference type="EC" id="3.1.1.81"/>
<dbReference type="EC" id="3.1.8.1"/>
<dbReference type="EMBL" id="L76193">
    <property type="protein sequence ID" value="AAC42090.1"/>
    <property type="molecule type" value="mRNA"/>
</dbReference>
<dbReference type="EMBL" id="AK088572">
    <property type="protein sequence ID" value="BAC40430.1"/>
    <property type="molecule type" value="mRNA"/>
</dbReference>
<dbReference type="EMBL" id="CH466533">
    <property type="protein sequence ID" value="EDL13970.1"/>
    <property type="molecule type" value="Genomic_DNA"/>
</dbReference>
<dbReference type="EMBL" id="BC099416">
    <property type="protein sequence ID" value="AAH99416.1"/>
    <property type="molecule type" value="mRNA"/>
</dbReference>
<dbReference type="CCDS" id="CCDS19899.1"/>
<dbReference type="RefSeq" id="NP_766594.1">
    <property type="nucleotide sequence ID" value="NM_173006.3"/>
</dbReference>
<dbReference type="SMR" id="Q62087"/>
<dbReference type="BioGRID" id="234716">
    <property type="interactions" value="2"/>
</dbReference>
<dbReference type="FunCoup" id="Q62087">
    <property type="interactions" value="16"/>
</dbReference>
<dbReference type="STRING" id="10090.ENSMUSP00000031773"/>
<dbReference type="GlyCosmos" id="Q62087">
    <property type="glycosylation" value="3 sites, No reported glycans"/>
</dbReference>
<dbReference type="GlyGen" id="Q62087">
    <property type="glycosylation" value="4 sites, 2 N-linked glycans (2 sites), 1 O-linked glycan (1 site)"/>
</dbReference>
<dbReference type="iPTMnet" id="Q62087"/>
<dbReference type="PhosphoSitePlus" id="Q62087"/>
<dbReference type="SwissPalm" id="Q62087"/>
<dbReference type="CPTAC" id="non-CPTAC-3939"/>
<dbReference type="jPOST" id="Q62087"/>
<dbReference type="PaxDb" id="10090-ENSMUSP00000031773"/>
<dbReference type="PeptideAtlas" id="Q62087"/>
<dbReference type="ProteomicsDB" id="289718"/>
<dbReference type="Pumba" id="Q62087"/>
<dbReference type="Antibodypedia" id="15863">
    <property type="antibodies" value="304 antibodies from 30 providers"/>
</dbReference>
<dbReference type="DNASU" id="269823"/>
<dbReference type="Ensembl" id="ENSMUST00000031773.9">
    <property type="protein sequence ID" value="ENSMUSP00000031773.3"/>
    <property type="gene ID" value="ENSMUSG00000029759.10"/>
</dbReference>
<dbReference type="GeneID" id="269823"/>
<dbReference type="KEGG" id="mmu:269823"/>
<dbReference type="UCSC" id="uc009awe.1">
    <property type="organism name" value="mouse"/>
</dbReference>
<dbReference type="AGR" id="MGI:106686"/>
<dbReference type="CTD" id="5446"/>
<dbReference type="MGI" id="MGI:106686">
    <property type="gene designation" value="Pon3"/>
</dbReference>
<dbReference type="VEuPathDB" id="HostDB:ENSMUSG00000029759"/>
<dbReference type="eggNOG" id="ENOG502S6UP">
    <property type="taxonomic scope" value="Eukaryota"/>
</dbReference>
<dbReference type="GeneTree" id="ENSGT00390000008932"/>
<dbReference type="HOGENOM" id="CLU_049839_0_1_1"/>
<dbReference type="InParanoid" id="Q62087"/>
<dbReference type="OMA" id="MKIHDNW"/>
<dbReference type="OrthoDB" id="423498at2759"/>
<dbReference type="PhylomeDB" id="Q62087"/>
<dbReference type="TreeFam" id="TF322436"/>
<dbReference type="BRENDA" id="3.1.1.2">
    <property type="organism ID" value="3474"/>
</dbReference>
<dbReference type="BRENDA" id="3.1.8.1">
    <property type="organism ID" value="3474"/>
</dbReference>
<dbReference type="Reactome" id="R-MMU-2142688">
    <property type="pathway name" value="Synthesis of 5-eicosatetraenoic acids"/>
</dbReference>
<dbReference type="Reactome" id="R-MMU-9754706">
    <property type="pathway name" value="Atorvastatin ADME"/>
</dbReference>
<dbReference type="BioGRID-ORCS" id="269823">
    <property type="hits" value="1 hit in 79 CRISPR screens"/>
</dbReference>
<dbReference type="PRO" id="PR:Q62087"/>
<dbReference type="Proteomes" id="UP000000589">
    <property type="component" value="Chromosome 6"/>
</dbReference>
<dbReference type="RNAct" id="Q62087">
    <property type="molecule type" value="protein"/>
</dbReference>
<dbReference type="Bgee" id="ENSMUSG00000029759">
    <property type="expression patterns" value="Expressed in parotid gland and 163 other cell types or tissues"/>
</dbReference>
<dbReference type="ExpressionAtlas" id="Q62087">
    <property type="expression patterns" value="baseline and differential"/>
</dbReference>
<dbReference type="GO" id="GO:0005576">
    <property type="term" value="C:extracellular region"/>
    <property type="evidence" value="ECO:0007669"/>
    <property type="project" value="UniProtKB-SubCell"/>
</dbReference>
<dbReference type="GO" id="GO:0102007">
    <property type="term" value="F:acyl-L-homoserine-lactone lactonohydrolase activity"/>
    <property type="evidence" value="ECO:0007669"/>
    <property type="project" value="UniProtKB-EC"/>
</dbReference>
<dbReference type="GO" id="GO:0004063">
    <property type="term" value="F:aryldialkylphosphatase activity"/>
    <property type="evidence" value="ECO:0007669"/>
    <property type="project" value="UniProtKB-EC"/>
</dbReference>
<dbReference type="GO" id="GO:0004064">
    <property type="term" value="F:arylesterase activity"/>
    <property type="evidence" value="ECO:0007669"/>
    <property type="project" value="UniProtKB-EC"/>
</dbReference>
<dbReference type="GO" id="GO:0046872">
    <property type="term" value="F:metal ion binding"/>
    <property type="evidence" value="ECO:0007669"/>
    <property type="project" value="UniProtKB-KW"/>
</dbReference>
<dbReference type="GO" id="GO:0042803">
    <property type="term" value="F:protein homodimerization activity"/>
    <property type="evidence" value="ECO:0007669"/>
    <property type="project" value="Ensembl"/>
</dbReference>
<dbReference type="GO" id="GO:0046395">
    <property type="term" value="P:carboxylic acid catabolic process"/>
    <property type="evidence" value="ECO:0007669"/>
    <property type="project" value="Ensembl"/>
</dbReference>
<dbReference type="GO" id="GO:0051649">
    <property type="term" value="P:establishment of localization in cell"/>
    <property type="evidence" value="ECO:0000314"/>
    <property type="project" value="MGI"/>
</dbReference>
<dbReference type="GO" id="GO:1901335">
    <property type="term" value="P:lactone catabolic process"/>
    <property type="evidence" value="ECO:0007669"/>
    <property type="project" value="Ensembl"/>
</dbReference>
<dbReference type="GO" id="GO:0032929">
    <property type="term" value="P:negative regulation of superoxide anion generation"/>
    <property type="evidence" value="ECO:0000314"/>
    <property type="project" value="CACAO"/>
</dbReference>
<dbReference type="GO" id="GO:2001038">
    <property type="term" value="P:regulation of cellular response to drug"/>
    <property type="evidence" value="ECO:0007669"/>
    <property type="project" value="Ensembl"/>
</dbReference>
<dbReference type="GO" id="GO:0003096">
    <property type="term" value="P:renal sodium ion transport"/>
    <property type="evidence" value="ECO:0000314"/>
    <property type="project" value="MGI"/>
</dbReference>
<dbReference type="FunFam" id="2.120.10.30:FF:000023">
    <property type="entry name" value="Serum paraoxonase/arylesterase 2"/>
    <property type="match status" value="1"/>
</dbReference>
<dbReference type="Gene3D" id="2.120.10.30">
    <property type="entry name" value="TolB, C-terminal domain"/>
    <property type="match status" value="1"/>
</dbReference>
<dbReference type="InterPro" id="IPR011042">
    <property type="entry name" value="6-blade_b-propeller_TolB-like"/>
</dbReference>
<dbReference type="InterPro" id="IPR002640">
    <property type="entry name" value="Arylesterase"/>
</dbReference>
<dbReference type="InterPro" id="IPR008364">
    <property type="entry name" value="Paraoxonase2"/>
</dbReference>
<dbReference type="InterPro" id="IPR051288">
    <property type="entry name" value="Serum_paraoxonase/arylesterase"/>
</dbReference>
<dbReference type="PANTHER" id="PTHR11799">
    <property type="entry name" value="PARAOXONASE"/>
    <property type="match status" value="1"/>
</dbReference>
<dbReference type="PANTHER" id="PTHR11799:SF14">
    <property type="entry name" value="SERUM PARAOXONASE_LACTONASE 3"/>
    <property type="match status" value="1"/>
</dbReference>
<dbReference type="Pfam" id="PF01731">
    <property type="entry name" value="Arylesterase"/>
    <property type="match status" value="1"/>
</dbReference>
<dbReference type="PRINTS" id="PR01785">
    <property type="entry name" value="PARAOXONASE"/>
</dbReference>
<dbReference type="PRINTS" id="PR01787">
    <property type="entry name" value="PARAOXONASE2"/>
</dbReference>
<dbReference type="SUPFAM" id="SSF63829">
    <property type="entry name" value="Calcium-dependent phosphotriesterase"/>
    <property type="match status" value="1"/>
</dbReference>
<sequence length="354" mass="39351">MGKLVALTLLGACLALIGERLLNFRERVSTTREIKATEPQNCHLIEGLENGSEDIDILPSGLAFISTGLKYPGMPAFAPDKPGRIFLMDLNEQNPEAQALEISGGLDQESLNPHGISTFIDKDNTAYLYVVNHPNMDSTVEIFKFEEQQRSLIHLKTLKHELLKSVNDIVVLGPEQFYATRDHYFTSYFLVLLEMILDPHWTSVVFYSPKEVKVVAQGFSSANGITVSLDQKFVYVADVTAKNIHIMKKHDNWDLTPVKVIQLGTLVDNLTVDPATGDILAGCHPNPMKLLIYNPEDPPGSEVLRIQDSLSDKPRVSTLYANNGSVLQGSTVASVYHKRMLIGTIFHKALYCDL</sequence>
<gene>
    <name type="primary">Pon3</name>
</gene>
<feature type="chain" id="PRO_0000223291" description="Serum paraoxonase/lactonase 3">
    <location>
        <begin position="1"/>
        <end position="354"/>
    </location>
</feature>
<feature type="signal peptide" description="Not cleaved" evidence="3">
    <location>
        <begin position="1"/>
        <end status="unknown"/>
    </location>
</feature>
<feature type="active site" description="Proton acceptor" evidence="1">
    <location>
        <position position="114"/>
    </location>
</feature>
<feature type="binding site" evidence="1">
    <location>
        <position position="53"/>
    </location>
    <ligand>
        <name>Ca(2+)</name>
        <dbReference type="ChEBI" id="CHEBI:29108"/>
        <label>1</label>
        <note>catalytic</note>
    </ligand>
</feature>
<feature type="binding site" evidence="1">
    <location>
        <position position="54"/>
    </location>
    <ligand>
        <name>Ca(2+)</name>
        <dbReference type="ChEBI" id="CHEBI:29108"/>
        <label>2</label>
    </ligand>
</feature>
<feature type="binding site" evidence="1">
    <location>
        <position position="116"/>
    </location>
    <ligand>
        <name>Ca(2+)</name>
        <dbReference type="ChEBI" id="CHEBI:29108"/>
        <label>2</label>
    </ligand>
</feature>
<feature type="binding site" evidence="1">
    <location>
        <position position="167"/>
    </location>
    <ligand>
        <name>Ca(2+)</name>
        <dbReference type="ChEBI" id="CHEBI:29108"/>
        <label>1</label>
        <note>catalytic</note>
    </ligand>
</feature>
<feature type="binding site" evidence="1">
    <location>
        <position position="168"/>
    </location>
    <ligand>
        <name>Ca(2+)</name>
        <dbReference type="ChEBI" id="CHEBI:29108"/>
        <label>2</label>
    </ligand>
</feature>
<feature type="binding site" evidence="1">
    <location>
        <position position="223"/>
    </location>
    <ligand>
        <name>Ca(2+)</name>
        <dbReference type="ChEBI" id="CHEBI:29108"/>
        <label>1</label>
        <note>catalytic</note>
    </ligand>
</feature>
<feature type="binding site" evidence="1">
    <location>
        <position position="268"/>
    </location>
    <ligand>
        <name>Ca(2+)</name>
        <dbReference type="ChEBI" id="CHEBI:29108"/>
        <label>1</label>
        <note>catalytic</note>
    </ligand>
</feature>
<feature type="binding site" evidence="1">
    <location>
        <position position="269"/>
    </location>
    <ligand>
        <name>Ca(2+)</name>
        <dbReference type="ChEBI" id="CHEBI:29108"/>
        <label>1</label>
        <note>catalytic</note>
    </ligand>
</feature>
<feature type="modified residue" description="Phosphoserine" evidence="2">
    <location>
        <position position="165"/>
    </location>
</feature>
<feature type="glycosylation site" description="N-linked (GlcNAc...) asparagine" evidence="3">
    <location>
        <position position="50"/>
    </location>
</feature>
<feature type="glycosylation site" description="N-linked (GlcNAc...) asparagine" evidence="3">
    <location>
        <position position="269"/>
    </location>
</feature>
<feature type="glycosylation site" description="N-linked (GlcNAc...) asparagine" evidence="3">
    <location>
        <position position="323"/>
    </location>
</feature>
<feature type="disulfide bond" evidence="1">
    <location>
        <begin position="42"/>
        <end position="352"/>
    </location>
</feature>
<feature type="sequence conflict" description="In Ref. 1; AAC42090." evidence="5" ref="1">
    <original>K</original>
    <variation>H</variation>
    <location>
        <position position="3"/>
    </location>
</feature>
<feature type="sequence conflict" description="In Ref. 1; AAC42090." evidence="5" ref="1">
    <original>T</original>
    <variation>P</variation>
    <location>
        <position position="8"/>
    </location>
</feature>
<feature type="sequence conflict" description="In Ref. 1; AAC42090." evidence="5" ref="1">
    <original>K</original>
    <variation>E</variation>
    <location>
        <position position="248"/>
    </location>
</feature>
<feature type="sequence conflict" description="In Ref. 1; AAC42090." evidence="5" ref="1">
    <original>D</original>
    <variation>A</variation>
    <location>
        <position position="273"/>
    </location>
</feature>
<feature type="sequence conflict" description="In Ref. 1; AAC42090." evidence="5" ref="1">
    <original>D</original>
    <variation>G</variation>
    <location>
        <position position="297"/>
    </location>
</feature>